<sequence>MEALMIRGVLEVHTDFTRQNVMIMEPQVLDFTVRGDKLWLHTEHGLLVSMAEYRSELLCTSAFLGYSAVFLLETEDAVTQVRLSDLRLKHRCGIVKADNLLHFALCTVISCVENCNLTRKCLHDLLQYLDAVNVRESFGRLLHHSARRLICSALYLLFEEKEPHIVQYVPATFVLFQQTRHTCLQLVARFFFRLTGQDEAHSFSLKLTERKTVDGWPVGLGLLDVLNANYPNLPSPPKLPPRWERGEEE</sequence>
<proteinExistence type="inferred from homology"/>
<name>CEP1_HCMVM</name>
<reference key="1">
    <citation type="journal article" date="2004" name="J. Gen. Virol.">
        <title>Genetic content of wild-type human cytomegalovirus.</title>
        <authorList>
            <person name="Dolan A."/>
            <person name="Cunningham C."/>
            <person name="Hector R.D."/>
            <person name="Hassan-Walker A.F."/>
            <person name="Lee L."/>
            <person name="Addison C."/>
            <person name="Dargan D.J."/>
            <person name="McGeoch D.J."/>
            <person name="Gatherer D."/>
            <person name="Emery V.C."/>
            <person name="Griffiths P.D."/>
            <person name="Sinzger C."/>
            <person name="McSharry B.P."/>
            <person name="Wilkinson G.W.G."/>
            <person name="Davison A.J."/>
        </authorList>
    </citation>
    <scope>NUCLEOTIDE SEQUENCE [LARGE SCALE GENOMIC DNA]</scope>
</reference>
<reference key="2">
    <citation type="journal article" date="2011" name="J. Virol.">
        <title>Cytomegalovirus UL103 controls virion and dense body egress.</title>
        <authorList>
            <person name="Ahlqvist J."/>
            <person name="Mocarski E."/>
        </authorList>
    </citation>
    <scope>FUNCTION</scope>
    <scope>SUBCELLULAR LOCATION</scope>
    <source>
        <strain>Towne</strain>
    </source>
</reference>
<accession>F5HA10</accession>
<keyword id="KW-1035">Host cytoplasm</keyword>
<keyword id="KW-1040">Host Golgi apparatus</keyword>
<keyword id="KW-1185">Reference proteome</keyword>
<keyword id="KW-0946">Virion</keyword>
<keyword id="KW-0920">Virion tegument</keyword>
<organism>
    <name type="scientific">Human cytomegalovirus (strain Merlin)</name>
    <name type="common">HHV-5</name>
    <name type="synonym">Human herpesvirus 5</name>
    <dbReference type="NCBI Taxonomy" id="295027"/>
    <lineage>
        <taxon>Viruses</taxon>
        <taxon>Duplodnaviria</taxon>
        <taxon>Heunggongvirae</taxon>
        <taxon>Peploviricota</taxon>
        <taxon>Herviviricetes</taxon>
        <taxon>Herpesvirales</taxon>
        <taxon>Orthoherpesviridae</taxon>
        <taxon>Betaherpesvirinae</taxon>
        <taxon>Cytomegalovirus</taxon>
        <taxon>Cytomegalovirus humanbeta5</taxon>
        <taxon>Human cytomegalovirus</taxon>
    </lineage>
</organism>
<comment type="function">
    <text evidence="1 2">Plays a critical role in cytoplasmic virus egress. Participates in the final step of tegumentation and envelope acquisition within the host cytoplasm.</text>
</comment>
<comment type="subcellular location">
    <subcellularLocation>
        <location evidence="1">Virion</location>
    </subcellularLocation>
    <subcellularLocation>
        <location evidence="1">Virion tegument</location>
    </subcellularLocation>
    <subcellularLocation>
        <location evidence="1 2">Host cytoplasm</location>
    </subcellularLocation>
    <subcellularLocation>
        <location evidence="1 2">Host Golgi apparatus</location>
    </subcellularLocation>
</comment>
<comment type="similarity">
    <text evidence="1">Belongs to the herpesviridae cytoplasmic envelopment protein 1 family.</text>
</comment>
<protein>
    <recommendedName>
        <fullName evidence="1">Cytoplasmic envelopment protein 1</fullName>
    </recommendedName>
</protein>
<feature type="chain" id="PRO_0000418241" description="Cytoplasmic envelopment protein 1">
    <location>
        <begin position="1"/>
        <end position="249"/>
    </location>
</feature>
<organismHost>
    <name type="scientific">Homo sapiens</name>
    <name type="common">Human</name>
    <dbReference type="NCBI Taxonomy" id="9606"/>
</organismHost>
<dbReference type="EMBL" id="AY446894">
    <property type="protein sequence ID" value="AAR31653.1"/>
    <property type="molecule type" value="Genomic_DNA"/>
</dbReference>
<dbReference type="RefSeq" id="YP_081549.1">
    <property type="nucleotide sequence ID" value="NC_006273.2"/>
</dbReference>
<dbReference type="GeneID" id="3077559"/>
<dbReference type="KEGG" id="vg:3077559"/>
<dbReference type="Reactome" id="R-HSA-9609690">
    <property type="pathway name" value="HCMV Early Events"/>
</dbReference>
<dbReference type="Reactome" id="R-HSA-9610379">
    <property type="pathway name" value="HCMV Late Events"/>
</dbReference>
<dbReference type="Proteomes" id="UP000000938">
    <property type="component" value="Segment"/>
</dbReference>
<dbReference type="GO" id="GO:0044177">
    <property type="term" value="C:host cell Golgi apparatus"/>
    <property type="evidence" value="ECO:0007669"/>
    <property type="project" value="UniProtKB-SubCell"/>
</dbReference>
<dbReference type="GO" id="GO:0019033">
    <property type="term" value="C:viral tegument"/>
    <property type="evidence" value="ECO:0000304"/>
    <property type="project" value="Reactome"/>
</dbReference>
<dbReference type="HAMAP" id="MF_04038">
    <property type="entry name" value="HSV_CEP1"/>
    <property type="match status" value="1"/>
</dbReference>
<dbReference type="InterPro" id="IPR002600">
    <property type="entry name" value="Herpes_UL7"/>
</dbReference>
<dbReference type="Pfam" id="PF01677">
    <property type="entry name" value="Herpes_UL7"/>
    <property type="match status" value="1"/>
</dbReference>
<evidence type="ECO:0000255" key="1">
    <source>
        <dbReference type="HAMAP-Rule" id="MF_04038"/>
    </source>
</evidence>
<evidence type="ECO:0000269" key="2">
    <source>
    </source>
</evidence>
<gene>
    <name type="primary">UL103</name>
</gene>